<name>CCS1_SYNSC</name>
<accession>Q3AHI9</accession>
<proteinExistence type="inferred from homology"/>
<dbReference type="EMBL" id="CP000110">
    <property type="protein sequence ID" value="ABB35943.1"/>
    <property type="molecule type" value="Genomic_DNA"/>
</dbReference>
<dbReference type="RefSeq" id="WP_011365143.1">
    <property type="nucleotide sequence ID" value="NC_007516.1"/>
</dbReference>
<dbReference type="STRING" id="110662.Syncc9605_2204"/>
<dbReference type="KEGG" id="syd:Syncc9605_2204"/>
<dbReference type="eggNOG" id="COG1333">
    <property type="taxonomic scope" value="Bacteria"/>
</dbReference>
<dbReference type="HOGENOM" id="CLU_034630_0_0_3"/>
<dbReference type="OrthoDB" id="9770923at2"/>
<dbReference type="GO" id="GO:0031676">
    <property type="term" value="C:plasma membrane-derived thylakoid membrane"/>
    <property type="evidence" value="ECO:0007669"/>
    <property type="project" value="UniProtKB-SubCell"/>
</dbReference>
<dbReference type="GO" id="GO:0017004">
    <property type="term" value="P:cytochrome complex assembly"/>
    <property type="evidence" value="ECO:0007669"/>
    <property type="project" value="UniProtKB-UniRule"/>
</dbReference>
<dbReference type="HAMAP" id="MF_01392">
    <property type="entry name" value="CytC_Ccs1"/>
    <property type="match status" value="1"/>
</dbReference>
<dbReference type="InterPro" id="IPR023494">
    <property type="entry name" value="Cyt_c_bgen_Ccs1/CcsB/ResB"/>
</dbReference>
<dbReference type="InterPro" id="IPR007816">
    <property type="entry name" value="ResB-like_domain"/>
</dbReference>
<dbReference type="PANTHER" id="PTHR31566">
    <property type="entry name" value="CYTOCHROME C BIOGENESIS PROTEIN CCS1, CHLOROPLASTIC"/>
    <property type="match status" value="1"/>
</dbReference>
<dbReference type="PANTHER" id="PTHR31566:SF0">
    <property type="entry name" value="CYTOCHROME C BIOGENESIS PROTEIN CCS1, CHLOROPLASTIC"/>
    <property type="match status" value="1"/>
</dbReference>
<dbReference type="Pfam" id="PF05140">
    <property type="entry name" value="ResB"/>
    <property type="match status" value="2"/>
</dbReference>
<evidence type="ECO:0000255" key="1">
    <source>
        <dbReference type="HAMAP-Rule" id="MF_01392"/>
    </source>
</evidence>
<comment type="function">
    <text evidence="1">Required during biogenesis of c-type cytochromes (cytochrome c6 and cytochrome f) at the step of heme attachment.</text>
</comment>
<comment type="subunit">
    <text evidence="1">May interact with CcsA.</text>
</comment>
<comment type="subcellular location">
    <subcellularLocation>
        <location evidence="1">Cellular thylakoid membrane</location>
        <topology evidence="1">Multi-pass membrane protein</topology>
    </subcellularLocation>
</comment>
<comment type="similarity">
    <text evidence="1">Belongs to the Ccs1/CcsB family.</text>
</comment>
<keyword id="KW-0201">Cytochrome c-type biogenesis</keyword>
<keyword id="KW-0472">Membrane</keyword>
<keyword id="KW-0793">Thylakoid</keyword>
<keyword id="KW-0812">Transmembrane</keyword>
<keyword id="KW-1133">Transmembrane helix</keyword>
<reference key="1">
    <citation type="submission" date="2005-07" db="EMBL/GenBank/DDBJ databases">
        <title>Complete sequence of Synechococcus sp. CC9605.</title>
        <authorList>
            <consortium name="US DOE Joint Genome Institute"/>
            <person name="Copeland A."/>
            <person name="Lucas S."/>
            <person name="Lapidus A."/>
            <person name="Barry K."/>
            <person name="Detter J.C."/>
            <person name="Glavina T."/>
            <person name="Hammon N."/>
            <person name="Israni S."/>
            <person name="Pitluck S."/>
            <person name="Schmutz J."/>
            <person name="Martinez M."/>
            <person name="Larimer F."/>
            <person name="Land M."/>
            <person name="Kyrpides N."/>
            <person name="Ivanova N."/>
            <person name="Richardson P."/>
        </authorList>
    </citation>
    <scope>NUCLEOTIDE SEQUENCE [LARGE SCALE GENOMIC DNA]</scope>
    <source>
        <strain>CC9605</strain>
    </source>
</reference>
<organism>
    <name type="scientific">Synechococcus sp. (strain CC9605)</name>
    <dbReference type="NCBI Taxonomy" id="110662"/>
    <lineage>
        <taxon>Bacteria</taxon>
        <taxon>Bacillati</taxon>
        <taxon>Cyanobacteriota</taxon>
        <taxon>Cyanophyceae</taxon>
        <taxon>Synechococcales</taxon>
        <taxon>Synechococcaceae</taxon>
        <taxon>Synechococcus</taxon>
    </lineage>
</organism>
<gene>
    <name evidence="1" type="primary">ccsB</name>
    <name evidence="1" type="synonym">ccs1</name>
    <name type="ordered locus">Syncc9605_2204</name>
</gene>
<feature type="chain" id="PRO_5000102446" description="Cytochrome c biogenesis protein CcsB">
    <location>
        <begin position="1"/>
        <end position="432"/>
    </location>
</feature>
<feature type="transmembrane region" description="Helical" evidence="1">
    <location>
        <begin position="18"/>
        <end position="38"/>
    </location>
</feature>
<feature type="transmembrane region" description="Helical" evidence="1">
    <location>
        <begin position="76"/>
        <end position="96"/>
    </location>
</feature>
<feature type="transmembrane region" description="Helical" evidence="1">
    <location>
        <begin position="166"/>
        <end position="186"/>
    </location>
</feature>
<protein>
    <recommendedName>
        <fullName evidence="1">Cytochrome c biogenesis protein CcsB</fullName>
    </recommendedName>
</protein>
<sequence length="432" mass="46738">MASGMGPLKRLAAWFSDLRLAIVLLLLIALASAVGTGIPQGDPPSSYIDAYSDTPWLGLLHGEQVLQLQLDHVYSSGWFLALLAWLGLALILCSWRRQWPALMAARRWIDYRTTRQLSKLAIAESQPCPDTSQGLTQLETVLRASGWQVQRKPQRLAARRGAIGRVGPLLVHTGLVLLMLGAAWGALAGNRLERFLAPGRSLDLLDRDGTSQLTITLDRFAIDRDPAGRTEQFRSALKLQGPNQSLDAEISVNHPLRHRGITVYQADWSLATISLQIGRSPVLELPLQTYPELGDQIWGLVLPTRPDGTEPVFLSLESEQGPATVFDADGQQLARLRPGGPSAEVKGLPMRVDAVLPASGLLLKRDPGVPLVYLGFAVLLVGGGLSLVATRQLWAIAADGTLSVGGLCNRNLAAFATELPQLLQQVVVDQQG</sequence>